<organism>
    <name type="scientific">Chlorobium luteolum (strain DSM 273 / BCRC 81028 / 2530)</name>
    <name type="common">Pelodictyon luteolum</name>
    <dbReference type="NCBI Taxonomy" id="319225"/>
    <lineage>
        <taxon>Bacteria</taxon>
        <taxon>Pseudomonadati</taxon>
        <taxon>Chlorobiota</taxon>
        <taxon>Chlorobiia</taxon>
        <taxon>Chlorobiales</taxon>
        <taxon>Chlorobiaceae</taxon>
        <taxon>Chlorobium/Pelodictyon group</taxon>
        <taxon>Pelodictyon</taxon>
    </lineage>
</organism>
<feature type="chain" id="PRO_0000230252" description="Glycogen synthase">
    <location>
        <begin position="1"/>
        <end position="489"/>
    </location>
</feature>
<feature type="binding site" evidence="1">
    <location>
        <position position="20"/>
    </location>
    <ligand>
        <name>ADP-alpha-D-glucose</name>
        <dbReference type="ChEBI" id="CHEBI:57498"/>
    </ligand>
</feature>
<comment type="function">
    <text evidence="1">Synthesizes alpha-1,4-glucan chains using ADP-glucose.</text>
</comment>
<comment type="catalytic activity">
    <reaction evidence="1">
        <text>[(1-&gt;4)-alpha-D-glucosyl](n) + ADP-alpha-D-glucose = [(1-&gt;4)-alpha-D-glucosyl](n+1) + ADP + H(+)</text>
        <dbReference type="Rhea" id="RHEA:18189"/>
        <dbReference type="Rhea" id="RHEA-COMP:9584"/>
        <dbReference type="Rhea" id="RHEA-COMP:9587"/>
        <dbReference type="ChEBI" id="CHEBI:15378"/>
        <dbReference type="ChEBI" id="CHEBI:15444"/>
        <dbReference type="ChEBI" id="CHEBI:57498"/>
        <dbReference type="ChEBI" id="CHEBI:456216"/>
        <dbReference type="EC" id="2.4.1.21"/>
    </reaction>
</comment>
<comment type="pathway">
    <text evidence="1">Glycan biosynthesis; glycogen biosynthesis.</text>
</comment>
<comment type="similarity">
    <text evidence="1">Belongs to the glycosyltransferase 1 family. Bacterial/plant glycogen synthase subfamily.</text>
</comment>
<sequence length="489" mass="55123">MSRRNYKVLYVSGEVSPFVRTSALADFMASFPQALEEEGFEARIMMPKYGTINDRKFRLHDVLRLSDIEVPLREKTDMLNVKVTALPSSKIQTYFLYNEKYFKRNGLFTDVYLGNDLKGNTEKVIFFNVGVLETLVRLGWKPDIIHCHDWYASLIPLLLKTVYRDHEFFKGIKTVLTIHNAYRQGVLPFKVFEKLLPEEVSGALHRSAENVNMLYTGVENADMLTTTSKLHADEILHDEIPGCGLQQILAGQNGILHGIVNGIDTRQWNPSTDKLIKKRFATDRMDGKLDNRAALSEEVHMPFEDGRPVVGVIMHFDDFQGAVLIEKSLKKLVALDIHLLICGAGDKKYEKSFRDFADAHPDRVSLSTDCPESFLHLAIAGLDMLVMAGKIESCGMLQMFAMSYGTIPVAYAGGGIVETIDEVSEGGGSGFIFREYTPDALVSKLHEAIGLYHDSERWQELVMRAMTRDFAWKGAAEEYAGLYRELLGN</sequence>
<name>GLGA_CHLL3</name>
<evidence type="ECO:0000255" key="1">
    <source>
        <dbReference type="HAMAP-Rule" id="MF_00484"/>
    </source>
</evidence>
<accession>Q3B6C3</accession>
<dbReference type="EC" id="2.4.1.21" evidence="1"/>
<dbReference type="EMBL" id="CP000096">
    <property type="protein sequence ID" value="ABB23108.1"/>
    <property type="molecule type" value="Genomic_DNA"/>
</dbReference>
<dbReference type="RefSeq" id="WP_011356983.1">
    <property type="nucleotide sequence ID" value="NC_007512.1"/>
</dbReference>
<dbReference type="SMR" id="Q3B6C3"/>
<dbReference type="STRING" id="319225.Plut_0220"/>
<dbReference type="CAZy" id="GT5">
    <property type="family name" value="Glycosyltransferase Family 5"/>
</dbReference>
<dbReference type="KEGG" id="plt:Plut_0220"/>
<dbReference type="eggNOG" id="COG0297">
    <property type="taxonomic scope" value="Bacteria"/>
</dbReference>
<dbReference type="HOGENOM" id="CLU_009583_18_0_10"/>
<dbReference type="OrthoDB" id="9808590at2"/>
<dbReference type="UniPathway" id="UPA00164"/>
<dbReference type="Proteomes" id="UP000002709">
    <property type="component" value="Chromosome"/>
</dbReference>
<dbReference type="GO" id="GO:0009011">
    <property type="term" value="F:alpha-1,4-glucan glucosyltransferase (ADP-glucose donor) activity"/>
    <property type="evidence" value="ECO:0007669"/>
    <property type="project" value="UniProtKB-UniRule"/>
</dbReference>
<dbReference type="GO" id="GO:0004373">
    <property type="term" value="F:alpha-1,4-glucan glucosyltransferase (UDP-glucose donor) activity"/>
    <property type="evidence" value="ECO:0007669"/>
    <property type="project" value="InterPro"/>
</dbReference>
<dbReference type="GO" id="GO:0005978">
    <property type="term" value="P:glycogen biosynthetic process"/>
    <property type="evidence" value="ECO:0007669"/>
    <property type="project" value="UniProtKB-UniRule"/>
</dbReference>
<dbReference type="CDD" id="cd03791">
    <property type="entry name" value="GT5_Glycogen_synthase_DULL1-like"/>
    <property type="match status" value="1"/>
</dbReference>
<dbReference type="Gene3D" id="3.40.50.2000">
    <property type="entry name" value="Glycogen Phosphorylase B"/>
    <property type="match status" value="2"/>
</dbReference>
<dbReference type="HAMAP" id="MF_00484">
    <property type="entry name" value="Glycogen_synth"/>
    <property type="match status" value="1"/>
</dbReference>
<dbReference type="InterPro" id="IPR001296">
    <property type="entry name" value="Glyco_trans_1"/>
</dbReference>
<dbReference type="InterPro" id="IPR011835">
    <property type="entry name" value="GS/SS"/>
</dbReference>
<dbReference type="InterPro" id="IPR013534">
    <property type="entry name" value="Starch_synth_cat_dom"/>
</dbReference>
<dbReference type="NCBIfam" id="TIGR02095">
    <property type="entry name" value="glgA"/>
    <property type="match status" value="1"/>
</dbReference>
<dbReference type="NCBIfam" id="NF010698">
    <property type="entry name" value="PRK14098.1"/>
    <property type="match status" value="1"/>
</dbReference>
<dbReference type="PANTHER" id="PTHR45825:SF11">
    <property type="entry name" value="ALPHA AMYLASE DOMAIN-CONTAINING PROTEIN"/>
    <property type="match status" value="1"/>
</dbReference>
<dbReference type="PANTHER" id="PTHR45825">
    <property type="entry name" value="GRANULE-BOUND STARCH SYNTHASE 1, CHLOROPLASTIC/AMYLOPLASTIC"/>
    <property type="match status" value="1"/>
</dbReference>
<dbReference type="Pfam" id="PF08323">
    <property type="entry name" value="Glyco_transf_5"/>
    <property type="match status" value="1"/>
</dbReference>
<dbReference type="Pfam" id="PF00534">
    <property type="entry name" value="Glycos_transf_1"/>
    <property type="match status" value="1"/>
</dbReference>
<dbReference type="SUPFAM" id="SSF53756">
    <property type="entry name" value="UDP-Glycosyltransferase/glycogen phosphorylase"/>
    <property type="match status" value="1"/>
</dbReference>
<proteinExistence type="inferred from homology"/>
<keyword id="KW-0320">Glycogen biosynthesis</keyword>
<keyword id="KW-0328">Glycosyltransferase</keyword>
<keyword id="KW-1185">Reference proteome</keyword>
<keyword id="KW-0808">Transferase</keyword>
<gene>
    <name evidence="1" type="primary">glgA</name>
    <name type="ordered locus">Plut_0220</name>
</gene>
<reference key="1">
    <citation type="submission" date="2005-08" db="EMBL/GenBank/DDBJ databases">
        <title>Complete sequence of Pelodictyon luteolum DSM 273.</title>
        <authorList>
            <consortium name="US DOE Joint Genome Institute"/>
            <person name="Copeland A."/>
            <person name="Lucas S."/>
            <person name="Lapidus A."/>
            <person name="Barry K."/>
            <person name="Detter J.C."/>
            <person name="Glavina T."/>
            <person name="Hammon N."/>
            <person name="Israni S."/>
            <person name="Pitluck S."/>
            <person name="Bryant D."/>
            <person name="Schmutz J."/>
            <person name="Larimer F."/>
            <person name="Land M."/>
            <person name="Kyrpides N."/>
            <person name="Ivanova N."/>
            <person name="Richardson P."/>
        </authorList>
    </citation>
    <scope>NUCLEOTIDE SEQUENCE [LARGE SCALE GENOMIC DNA]</scope>
    <source>
        <strain>DSM 273 / BCRC 81028 / 2530</strain>
    </source>
</reference>
<protein>
    <recommendedName>
        <fullName evidence="1">Glycogen synthase</fullName>
        <ecNumber evidence="1">2.4.1.21</ecNumber>
    </recommendedName>
    <alternativeName>
        <fullName evidence="1">Starch [bacterial glycogen] synthase</fullName>
    </alternativeName>
</protein>